<gene>
    <name evidence="1" type="primary">zapD</name>
    <name type="ordered locus">BPSL3012</name>
</gene>
<keyword id="KW-0131">Cell cycle</keyword>
<keyword id="KW-0132">Cell division</keyword>
<keyword id="KW-0963">Cytoplasm</keyword>
<keyword id="KW-1185">Reference proteome</keyword>
<keyword id="KW-0717">Septation</keyword>
<organism>
    <name type="scientific">Burkholderia pseudomallei (strain K96243)</name>
    <dbReference type="NCBI Taxonomy" id="272560"/>
    <lineage>
        <taxon>Bacteria</taxon>
        <taxon>Pseudomonadati</taxon>
        <taxon>Pseudomonadota</taxon>
        <taxon>Betaproteobacteria</taxon>
        <taxon>Burkholderiales</taxon>
        <taxon>Burkholderiaceae</taxon>
        <taxon>Burkholderia</taxon>
        <taxon>pseudomallei group</taxon>
    </lineage>
</organism>
<protein>
    <recommendedName>
        <fullName evidence="1">Cell division protein ZapD</fullName>
    </recommendedName>
    <alternativeName>
        <fullName evidence="1">Z ring-associated protein D</fullName>
    </alternativeName>
</protein>
<dbReference type="EMBL" id="BX571965">
    <property type="protein sequence ID" value="CAH37023.1"/>
    <property type="molecule type" value="Genomic_DNA"/>
</dbReference>
<dbReference type="RefSeq" id="WP_004195118.1">
    <property type="nucleotide sequence ID" value="NZ_CP009538.1"/>
</dbReference>
<dbReference type="RefSeq" id="YP_109607.1">
    <property type="nucleotide sequence ID" value="NC_006350.1"/>
</dbReference>
<dbReference type="SMR" id="Q63QL1"/>
<dbReference type="STRING" id="272560.BPSL3012"/>
<dbReference type="GeneID" id="93061613"/>
<dbReference type="KEGG" id="bps:BPSL3012"/>
<dbReference type="PATRIC" id="fig|272560.51.peg.2257"/>
<dbReference type="eggNOG" id="COG4582">
    <property type="taxonomic scope" value="Bacteria"/>
</dbReference>
<dbReference type="Proteomes" id="UP000000605">
    <property type="component" value="Chromosome 1"/>
</dbReference>
<dbReference type="GO" id="GO:0032153">
    <property type="term" value="C:cell division site"/>
    <property type="evidence" value="ECO:0007669"/>
    <property type="project" value="TreeGrafter"/>
</dbReference>
<dbReference type="GO" id="GO:0005737">
    <property type="term" value="C:cytoplasm"/>
    <property type="evidence" value="ECO:0007669"/>
    <property type="project" value="UniProtKB-SubCell"/>
</dbReference>
<dbReference type="GO" id="GO:0000917">
    <property type="term" value="P:division septum assembly"/>
    <property type="evidence" value="ECO:0007669"/>
    <property type="project" value="UniProtKB-KW"/>
</dbReference>
<dbReference type="GO" id="GO:0043093">
    <property type="term" value="P:FtsZ-dependent cytokinesis"/>
    <property type="evidence" value="ECO:0007669"/>
    <property type="project" value="UniProtKB-UniRule"/>
</dbReference>
<dbReference type="Gene3D" id="1.10.3900.10">
    <property type="entry name" value="YacF-like"/>
    <property type="match status" value="1"/>
</dbReference>
<dbReference type="Gene3D" id="2.60.440.10">
    <property type="entry name" value="YacF-like domains"/>
    <property type="match status" value="1"/>
</dbReference>
<dbReference type="HAMAP" id="MF_01092">
    <property type="entry name" value="ZapD"/>
    <property type="match status" value="1"/>
</dbReference>
<dbReference type="InterPro" id="IPR009777">
    <property type="entry name" value="ZapD"/>
</dbReference>
<dbReference type="InterPro" id="IPR027462">
    <property type="entry name" value="ZapD_C"/>
</dbReference>
<dbReference type="InterPro" id="IPR036268">
    <property type="entry name" value="ZapD_sf"/>
</dbReference>
<dbReference type="NCBIfam" id="NF003656">
    <property type="entry name" value="PRK05287.1-4"/>
    <property type="match status" value="1"/>
</dbReference>
<dbReference type="PANTHER" id="PTHR39455">
    <property type="entry name" value="CELL DIVISION PROTEIN ZAPD"/>
    <property type="match status" value="1"/>
</dbReference>
<dbReference type="PANTHER" id="PTHR39455:SF1">
    <property type="entry name" value="CELL DIVISION PROTEIN ZAPD"/>
    <property type="match status" value="1"/>
</dbReference>
<dbReference type="Pfam" id="PF07072">
    <property type="entry name" value="ZapD"/>
    <property type="match status" value="1"/>
</dbReference>
<dbReference type="SUPFAM" id="SSF160950">
    <property type="entry name" value="YacF-like"/>
    <property type="match status" value="1"/>
</dbReference>
<name>ZAPD_BURPS</name>
<comment type="function">
    <text evidence="1">Cell division factor that enhances FtsZ-ring assembly. Directly interacts with FtsZ and promotes bundling of FtsZ protofilaments, with a reduction in FtsZ GTPase activity.</text>
</comment>
<comment type="subunit">
    <text evidence="1">Interacts with FtsZ.</text>
</comment>
<comment type="subcellular location">
    <subcellularLocation>
        <location evidence="1">Cytoplasm</location>
    </subcellularLocation>
    <text evidence="1">Localizes to mid-cell in an FtsZ-dependent manner.</text>
</comment>
<comment type="similarity">
    <text evidence="1">Belongs to the ZapD family.</text>
</comment>
<reference key="1">
    <citation type="journal article" date="2004" name="Proc. Natl. Acad. Sci. U.S.A.">
        <title>Genomic plasticity of the causative agent of melioidosis, Burkholderia pseudomallei.</title>
        <authorList>
            <person name="Holden M.T.G."/>
            <person name="Titball R.W."/>
            <person name="Peacock S.J."/>
            <person name="Cerdeno-Tarraga A.-M."/>
            <person name="Atkins T."/>
            <person name="Crossman L.C."/>
            <person name="Pitt T."/>
            <person name="Churcher C."/>
            <person name="Mungall K.L."/>
            <person name="Bentley S.D."/>
            <person name="Sebaihia M."/>
            <person name="Thomson N.R."/>
            <person name="Bason N."/>
            <person name="Beacham I.R."/>
            <person name="Brooks K."/>
            <person name="Brown K.A."/>
            <person name="Brown N.F."/>
            <person name="Challis G.L."/>
            <person name="Cherevach I."/>
            <person name="Chillingworth T."/>
            <person name="Cronin A."/>
            <person name="Crossett B."/>
            <person name="Davis P."/>
            <person name="DeShazer D."/>
            <person name="Feltwell T."/>
            <person name="Fraser A."/>
            <person name="Hance Z."/>
            <person name="Hauser H."/>
            <person name="Holroyd S."/>
            <person name="Jagels K."/>
            <person name="Keith K.E."/>
            <person name="Maddison M."/>
            <person name="Moule S."/>
            <person name="Price C."/>
            <person name="Quail M.A."/>
            <person name="Rabbinowitsch E."/>
            <person name="Rutherford K."/>
            <person name="Sanders M."/>
            <person name="Simmonds M."/>
            <person name="Songsivilai S."/>
            <person name="Stevens K."/>
            <person name="Tumapa S."/>
            <person name="Vesaratchavest M."/>
            <person name="Whitehead S."/>
            <person name="Yeats C."/>
            <person name="Barrell B.G."/>
            <person name="Oyston P.C.F."/>
            <person name="Parkhill J."/>
        </authorList>
    </citation>
    <scope>NUCLEOTIDE SEQUENCE [LARGE SCALE GENOMIC DNA]</scope>
    <source>
        <strain>K96243</strain>
    </source>
</reference>
<evidence type="ECO:0000255" key="1">
    <source>
        <dbReference type="HAMAP-Rule" id="MF_01092"/>
    </source>
</evidence>
<proteinExistence type="inferred from homology"/>
<sequence length="251" mass="28878">MILYEYPFNERIRTLLRLEDLFERFTFFVAQEDAREHHVALTTLFEISEVAGRADLKSDLMKELERQRQTLAPFRGNPGIEQNALEAVLGEIEQTLANLAQMQGKTGQHLIDNEWLASIRSRAVIPGGTCKFDLPSYYAWQQWPAEQRRHDIAKWAMPLLPLRDAAMIVLRLARESGQASKVMAMQGSYQQMLSGRTYQLMQVRVPPELRVIPEASANKYMLWVRFTAQDGDVRPRAVDIDVPFQLTLCNL</sequence>
<feature type="chain" id="PRO_0000211664" description="Cell division protein ZapD">
    <location>
        <begin position="1"/>
        <end position="251"/>
    </location>
</feature>
<accession>Q63QL1</accession>